<reference key="1">
    <citation type="submission" date="2007-04" db="EMBL/GenBank/DDBJ databases">
        <title>Complete sequence of chromosome of Rhodobacter sphaeroides ATCC 17025.</title>
        <authorList>
            <consortium name="US DOE Joint Genome Institute"/>
            <person name="Copeland A."/>
            <person name="Lucas S."/>
            <person name="Lapidus A."/>
            <person name="Barry K."/>
            <person name="Detter J.C."/>
            <person name="Glavina del Rio T."/>
            <person name="Hammon N."/>
            <person name="Israni S."/>
            <person name="Dalin E."/>
            <person name="Tice H."/>
            <person name="Pitluck S."/>
            <person name="Chertkov O."/>
            <person name="Brettin T."/>
            <person name="Bruce D."/>
            <person name="Han C."/>
            <person name="Schmutz J."/>
            <person name="Larimer F."/>
            <person name="Land M."/>
            <person name="Hauser L."/>
            <person name="Kyrpides N."/>
            <person name="Kim E."/>
            <person name="Richardson P."/>
            <person name="Mackenzie C."/>
            <person name="Choudhary M."/>
            <person name="Donohue T.J."/>
            <person name="Kaplan S."/>
        </authorList>
    </citation>
    <scope>NUCLEOTIDE SEQUENCE [LARGE SCALE GENOMIC DNA]</scope>
    <source>
        <strain>ATCC 17025 / ATH 2.4.3</strain>
    </source>
</reference>
<accession>A4WWA0</accession>
<feature type="chain" id="PRO_1000062810" description="Undecaprenyl-diphosphatase">
    <location>
        <begin position="1"/>
        <end position="268"/>
    </location>
</feature>
<feature type="transmembrane region" description="Helical" evidence="1">
    <location>
        <begin position="4"/>
        <end position="24"/>
    </location>
</feature>
<feature type="transmembrane region" description="Helical" evidence="1">
    <location>
        <begin position="50"/>
        <end position="70"/>
    </location>
</feature>
<feature type="transmembrane region" description="Helical" evidence="1">
    <location>
        <begin position="84"/>
        <end position="104"/>
    </location>
</feature>
<feature type="transmembrane region" description="Helical" evidence="1">
    <location>
        <begin position="109"/>
        <end position="129"/>
    </location>
</feature>
<feature type="transmembrane region" description="Helical" evidence="1">
    <location>
        <begin position="144"/>
        <end position="164"/>
    </location>
</feature>
<feature type="transmembrane region" description="Helical" evidence="1">
    <location>
        <begin position="184"/>
        <end position="204"/>
    </location>
</feature>
<feature type="transmembrane region" description="Helical" evidence="1">
    <location>
        <begin position="214"/>
        <end position="234"/>
    </location>
</feature>
<feature type="transmembrane region" description="Helical" evidence="1">
    <location>
        <begin position="245"/>
        <end position="265"/>
    </location>
</feature>
<sequence length="268" mass="28296">MTDSTTLVALVLGLLEGLTEFIPVSSTGHLLLAGHFLGFESAGRSFEVVIQLGAVLAVLTVYASKLISVIRAAPRDPQAARFLAAVLLAFLPAVVVGVMAHGFIKTVLFETPILIAIMLILGGIILLFVDRMAPAPRYNDVTEVPLGVALKIGFFQCLAMVPGVSRSGATIVGALLLGTGKRAAAEFSFFLSMPTMAGAFAFDLYKNRDVLDAGALGEIAVGFVAAFLAAVLVVRWLLGYVSRHGYSLFGWWRIIVGSIALAALLKGF</sequence>
<proteinExistence type="inferred from homology"/>
<organism>
    <name type="scientific">Cereibacter sphaeroides (strain ATCC 17025 / ATH 2.4.3)</name>
    <name type="common">Rhodobacter sphaeroides</name>
    <dbReference type="NCBI Taxonomy" id="349102"/>
    <lineage>
        <taxon>Bacteria</taxon>
        <taxon>Pseudomonadati</taxon>
        <taxon>Pseudomonadota</taxon>
        <taxon>Alphaproteobacteria</taxon>
        <taxon>Rhodobacterales</taxon>
        <taxon>Paracoccaceae</taxon>
        <taxon>Cereibacter</taxon>
    </lineage>
</organism>
<name>UPPP_CERS5</name>
<evidence type="ECO:0000255" key="1">
    <source>
        <dbReference type="HAMAP-Rule" id="MF_01006"/>
    </source>
</evidence>
<keyword id="KW-0046">Antibiotic resistance</keyword>
<keyword id="KW-0997">Cell inner membrane</keyword>
<keyword id="KW-1003">Cell membrane</keyword>
<keyword id="KW-0133">Cell shape</keyword>
<keyword id="KW-0961">Cell wall biogenesis/degradation</keyword>
<keyword id="KW-0378">Hydrolase</keyword>
<keyword id="KW-0472">Membrane</keyword>
<keyword id="KW-0573">Peptidoglycan synthesis</keyword>
<keyword id="KW-0812">Transmembrane</keyword>
<keyword id="KW-1133">Transmembrane helix</keyword>
<comment type="function">
    <text evidence="1">Catalyzes the dephosphorylation of undecaprenyl diphosphate (UPP). Confers resistance to bacitracin.</text>
</comment>
<comment type="catalytic activity">
    <reaction evidence="1">
        <text>di-trans,octa-cis-undecaprenyl diphosphate + H2O = di-trans,octa-cis-undecaprenyl phosphate + phosphate + H(+)</text>
        <dbReference type="Rhea" id="RHEA:28094"/>
        <dbReference type="ChEBI" id="CHEBI:15377"/>
        <dbReference type="ChEBI" id="CHEBI:15378"/>
        <dbReference type="ChEBI" id="CHEBI:43474"/>
        <dbReference type="ChEBI" id="CHEBI:58405"/>
        <dbReference type="ChEBI" id="CHEBI:60392"/>
        <dbReference type="EC" id="3.6.1.27"/>
    </reaction>
</comment>
<comment type="subcellular location">
    <subcellularLocation>
        <location evidence="1">Cell inner membrane</location>
        <topology evidence="1">Multi-pass membrane protein</topology>
    </subcellularLocation>
</comment>
<comment type="miscellaneous">
    <text>Bacitracin is thought to be involved in the inhibition of peptidoglycan synthesis by sequestering undecaprenyl diphosphate, thereby reducing the pool of lipid carrier available.</text>
</comment>
<comment type="similarity">
    <text evidence="1">Belongs to the UppP family.</text>
</comment>
<dbReference type="EC" id="3.6.1.27" evidence="1"/>
<dbReference type="EMBL" id="CP000661">
    <property type="protein sequence ID" value="ABP71664.1"/>
    <property type="molecule type" value="Genomic_DNA"/>
</dbReference>
<dbReference type="SMR" id="A4WWA0"/>
<dbReference type="STRING" id="349102.Rsph17025_2777"/>
<dbReference type="KEGG" id="rsq:Rsph17025_2777"/>
<dbReference type="eggNOG" id="COG1968">
    <property type="taxonomic scope" value="Bacteria"/>
</dbReference>
<dbReference type="HOGENOM" id="CLU_060296_2_0_5"/>
<dbReference type="BioCyc" id="RSPH349102:G1G8M-2859-MONOMER"/>
<dbReference type="GO" id="GO:0005886">
    <property type="term" value="C:plasma membrane"/>
    <property type="evidence" value="ECO:0007669"/>
    <property type="project" value="UniProtKB-SubCell"/>
</dbReference>
<dbReference type="GO" id="GO:0050380">
    <property type="term" value="F:undecaprenyl-diphosphatase activity"/>
    <property type="evidence" value="ECO:0007669"/>
    <property type="project" value="UniProtKB-UniRule"/>
</dbReference>
<dbReference type="GO" id="GO:0071555">
    <property type="term" value="P:cell wall organization"/>
    <property type="evidence" value="ECO:0007669"/>
    <property type="project" value="UniProtKB-KW"/>
</dbReference>
<dbReference type="GO" id="GO:0009252">
    <property type="term" value="P:peptidoglycan biosynthetic process"/>
    <property type="evidence" value="ECO:0007669"/>
    <property type="project" value="UniProtKB-KW"/>
</dbReference>
<dbReference type="GO" id="GO:0008360">
    <property type="term" value="P:regulation of cell shape"/>
    <property type="evidence" value="ECO:0007669"/>
    <property type="project" value="UniProtKB-KW"/>
</dbReference>
<dbReference type="GO" id="GO:0046677">
    <property type="term" value="P:response to antibiotic"/>
    <property type="evidence" value="ECO:0007669"/>
    <property type="project" value="UniProtKB-UniRule"/>
</dbReference>
<dbReference type="HAMAP" id="MF_01006">
    <property type="entry name" value="Undec_diphosphatase"/>
    <property type="match status" value="1"/>
</dbReference>
<dbReference type="InterPro" id="IPR003824">
    <property type="entry name" value="UppP"/>
</dbReference>
<dbReference type="NCBIfam" id="NF001389">
    <property type="entry name" value="PRK00281.1-2"/>
    <property type="match status" value="1"/>
</dbReference>
<dbReference type="NCBIfam" id="NF001390">
    <property type="entry name" value="PRK00281.1-4"/>
    <property type="match status" value="1"/>
</dbReference>
<dbReference type="NCBIfam" id="TIGR00753">
    <property type="entry name" value="undec_PP_bacA"/>
    <property type="match status" value="1"/>
</dbReference>
<dbReference type="PANTHER" id="PTHR30622">
    <property type="entry name" value="UNDECAPRENYL-DIPHOSPHATASE"/>
    <property type="match status" value="1"/>
</dbReference>
<dbReference type="PANTHER" id="PTHR30622:SF3">
    <property type="entry name" value="UNDECAPRENYL-DIPHOSPHATASE"/>
    <property type="match status" value="1"/>
</dbReference>
<dbReference type="Pfam" id="PF02673">
    <property type="entry name" value="BacA"/>
    <property type="match status" value="1"/>
</dbReference>
<protein>
    <recommendedName>
        <fullName evidence="1">Undecaprenyl-diphosphatase</fullName>
        <ecNumber evidence="1">3.6.1.27</ecNumber>
    </recommendedName>
    <alternativeName>
        <fullName evidence="1">Bacitracin resistance protein</fullName>
    </alternativeName>
    <alternativeName>
        <fullName evidence="1">Undecaprenyl pyrophosphate phosphatase</fullName>
    </alternativeName>
</protein>
<gene>
    <name evidence="1" type="primary">uppP</name>
    <name type="ordered locus">Rsph17025_2777</name>
</gene>